<proteinExistence type="inferred from homology"/>
<dbReference type="EC" id="6.3.2.4" evidence="2"/>
<dbReference type="EMBL" id="CR954253">
    <property type="protein sequence ID" value="CAI97025.1"/>
    <property type="molecule type" value="Genomic_DNA"/>
</dbReference>
<dbReference type="RefSeq" id="WP_003624143.1">
    <property type="nucleotide sequence ID" value="NZ_JQAV01000003.1"/>
</dbReference>
<dbReference type="SMR" id="Q1G7Q5"/>
<dbReference type="STRING" id="390333.Ldb0185"/>
<dbReference type="KEGG" id="ldb:Ldb0185"/>
<dbReference type="PATRIC" id="fig|390333.13.peg.1290"/>
<dbReference type="eggNOG" id="COG1181">
    <property type="taxonomic scope" value="Bacteria"/>
</dbReference>
<dbReference type="HOGENOM" id="CLU_039268_0_0_9"/>
<dbReference type="BioCyc" id="LDEL390333:LDB_RS00770-MONOMER"/>
<dbReference type="UniPathway" id="UPA00219"/>
<dbReference type="Proteomes" id="UP000001259">
    <property type="component" value="Chromosome"/>
</dbReference>
<dbReference type="GO" id="GO:0005829">
    <property type="term" value="C:cytosol"/>
    <property type="evidence" value="ECO:0007669"/>
    <property type="project" value="TreeGrafter"/>
</dbReference>
<dbReference type="GO" id="GO:0005524">
    <property type="term" value="F:ATP binding"/>
    <property type="evidence" value="ECO:0007669"/>
    <property type="project" value="UniProtKB-KW"/>
</dbReference>
<dbReference type="GO" id="GO:0008716">
    <property type="term" value="F:D-alanine-D-alanine ligase activity"/>
    <property type="evidence" value="ECO:0007669"/>
    <property type="project" value="UniProtKB-UniRule"/>
</dbReference>
<dbReference type="GO" id="GO:0046872">
    <property type="term" value="F:metal ion binding"/>
    <property type="evidence" value="ECO:0007669"/>
    <property type="project" value="UniProtKB-KW"/>
</dbReference>
<dbReference type="GO" id="GO:0071555">
    <property type="term" value="P:cell wall organization"/>
    <property type="evidence" value="ECO:0007669"/>
    <property type="project" value="UniProtKB-KW"/>
</dbReference>
<dbReference type="GO" id="GO:0009252">
    <property type="term" value="P:peptidoglycan biosynthetic process"/>
    <property type="evidence" value="ECO:0007669"/>
    <property type="project" value="UniProtKB-UniRule"/>
</dbReference>
<dbReference type="GO" id="GO:0008360">
    <property type="term" value="P:regulation of cell shape"/>
    <property type="evidence" value="ECO:0007669"/>
    <property type="project" value="UniProtKB-KW"/>
</dbReference>
<dbReference type="FunFam" id="3.30.470.20:FF:000008">
    <property type="entry name" value="D-alanine--D-alanine ligase"/>
    <property type="match status" value="1"/>
</dbReference>
<dbReference type="Gene3D" id="3.40.50.20">
    <property type="match status" value="1"/>
</dbReference>
<dbReference type="Gene3D" id="3.30.1490.20">
    <property type="entry name" value="ATP-grasp fold, A domain"/>
    <property type="match status" value="1"/>
</dbReference>
<dbReference type="Gene3D" id="3.30.470.20">
    <property type="entry name" value="ATP-grasp fold, B domain"/>
    <property type="match status" value="1"/>
</dbReference>
<dbReference type="HAMAP" id="MF_00047">
    <property type="entry name" value="Dala_Dala_lig"/>
    <property type="match status" value="1"/>
</dbReference>
<dbReference type="InterPro" id="IPR011761">
    <property type="entry name" value="ATP-grasp"/>
</dbReference>
<dbReference type="InterPro" id="IPR013815">
    <property type="entry name" value="ATP_grasp_subdomain_1"/>
</dbReference>
<dbReference type="InterPro" id="IPR000291">
    <property type="entry name" value="D-Ala_lig_Van_CS"/>
</dbReference>
<dbReference type="InterPro" id="IPR005905">
    <property type="entry name" value="D_ala_D_ala"/>
</dbReference>
<dbReference type="InterPro" id="IPR011095">
    <property type="entry name" value="Dala_Dala_lig_C"/>
</dbReference>
<dbReference type="InterPro" id="IPR011127">
    <property type="entry name" value="Dala_Dala_lig_N"/>
</dbReference>
<dbReference type="InterPro" id="IPR016185">
    <property type="entry name" value="PreATP-grasp_dom_sf"/>
</dbReference>
<dbReference type="NCBIfam" id="TIGR01205">
    <property type="entry name" value="D_ala_D_alaTIGR"/>
    <property type="match status" value="1"/>
</dbReference>
<dbReference type="NCBIfam" id="NF002528">
    <property type="entry name" value="PRK01966.1-4"/>
    <property type="match status" value="1"/>
</dbReference>
<dbReference type="PANTHER" id="PTHR23132">
    <property type="entry name" value="D-ALANINE--D-ALANINE LIGASE"/>
    <property type="match status" value="1"/>
</dbReference>
<dbReference type="PANTHER" id="PTHR23132:SF25">
    <property type="entry name" value="D-ALANINE--D-ALANINE LIGASE A"/>
    <property type="match status" value="1"/>
</dbReference>
<dbReference type="Pfam" id="PF07478">
    <property type="entry name" value="Dala_Dala_lig_C"/>
    <property type="match status" value="1"/>
</dbReference>
<dbReference type="Pfam" id="PF01820">
    <property type="entry name" value="Dala_Dala_lig_N"/>
    <property type="match status" value="1"/>
</dbReference>
<dbReference type="PIRSF" id="PIRSF039102">
    <property type="entry name" value="Ddl/VanB"/>
    <property type="match status" value="1"/>
</dbReference>
<dbReference type="SUPFAM" id="SSF56059">
    <property type="entry name" value="Glutathione synthetase ATP-binding domain-like"/>
    <property type="match status" value="1"/>
</dbReference>
<dbReference type="SUPFAM" id="SSF52440">
    <property type="entry name" value="PreATP-grasp domain"/>
    <property type="match status" value="1"/>
</dbReference>
<dbReference type="PROSITE" id="PS50975">
    <property type="entry name" value="ATP_GRASP"/>
    <property type="match status" value="1"/>
</dbReference>
<dbReference type="PROSITE" id="PS00843">
    <property type="entry name" value="DALA_DALA_LIGASE_1"/>
    <property type="match status" value="1"/>
</dbReference>
<reference key="1">
    <citation type="journal article" date="2006" name="Proc. Natl. Acad. Sci. U.S.A.">
        <title>The complete genome sequence of Lactobacillus bulgaricus reveals extensive and ongoing reductive evolution.</title>
        <authorList>
            <person name="van de Guchte M."/>
            <person name="Penaud S."/>
            <person name="Grimaldi C."/>
            <person name="Barbe V."/>
            <person name="Bryson K."/>
            <person name="Nicolas P."/>
            <person name="Robert C."/>
            <person name="Oztas S."/>
            <person name="Mangenot S."/>
            <person name="Couloux A."/>
            <person name="Loux V."/>
            <person name="Dervyn R."/>
            <person name="Bossy R."/>
            <person name="Bolotin A."/>
            <person name="Batto J.-M."/>
            <person name="Walunas T."/>
            <person name="Gibrat J.-F."/>
            <person name="Bessieres P."/>
            <person name="Weissenbach J."/>
            <person name="Ehrlich S.D."/>
            <person name="Maguin E."/>
        </authorList>
    </citation>
    <scope>NUCLEOTIDE SEQUENCE [LARGE SCALE GENOMIC DNA]</scope>
    <source>
        <strain>ATCC 11842 / DSM 20081 / BCRC 10696 / JCM 1002 / NBRC 13953 / NCIMB 11778 / NCTC 12712 / WDCM 00102 / Lb 14</strain>
    </source>
</reference>
<feature type="chain" id="PRO_0000341117" description="D-alanine--D-alanine ligase">
    <location>
        <begin position="1"/>
        <end position="362"/>
    </location>
</feature>
<feature type="domain" description="ATP-grasp" evidence="2">
    <location>
        <begin position="134"/>
        <end position="345"/>
    </location>
</feature>
<feature type="binding site" evidence="2">
    <location>
        <begin position="170"/>
        <end position="225"/>
    </location>
    <ligand>
        <name>ATP</name>
        <dbReference type="ChEBI" id="CHEBI:30616"/>
    </ligand>
</feature>
<feature type="binding site" evidence="2">
    <location>
        <position position="298"/>
    </location>
    <ligand>
        <name>Mg(2+)</name>
        <dbReference type="ChEBI" id="CHEBI:18420"/>
        <label>1</label>
    </ligand>
</feature>
<feature type="binding site" evidence="2">
    <location>
        <position position="312"/>
    </location>
    <ligand>
        <name>Mg(2+)</name>
        <dbReference type="ChEBI" id="CHEBI:18420"/>
        <label>1</label>
    </ligand>
</feature>
<feature type="binding site" evidence="2">
    <location>
        <position position="312"/>
    </location>
    <ligand>
        <name>Mg(2+)</name>
        <dbReference type="ChEBI" id="CHEBI:18420"/>
        <label>2</label>
    </ligand>
</feature>
<feature type="binding site" evidence="2">
    <location>
        <position position="314"/>
    </location>
    <ligand>
        <name>Mg(2+)</name>
        <dbReference type="ChEBI" id="CHEBI:18420"/>
        <label>2</label>
    </ligand>
</feature>
<gene>
    <name evidence="2" type="primary">ddl</name>
    <name type="ordered locus">Ldb0185</name>
</gene>
<evidence type="ECO:0000250" key="1"/>
<evidence type="ECO:0000255" key="2">
    <source>
        <dbReference type="HAMAP-Rule" id="MF_00047"/>
    </source>
</evidence>
<organism>
    <name type="scientific">Lactobacillus delbrueckii subsp. bulgaricus (strain ATCC 11842 / DSM 20081 / BCRC 10696 / JCM 1002 / NBRC 13953 / NCIMB 11778 / NCTC 12712 / WDCM 00102 / Lb 14)</name>
    <dbReference type="NCBI Taxonomy" id="390333"/>
    <lineage>
        <taxon>Bacteria</taxon>
        <taxon>Bacillati</taxon>
        <taxon>Bacillota</taxon>
        <taxon>Bacilli</taxon>
        <taxon>Lactobacillales</taxon>
        <taxon>Lactobacillaceae</taxon>
        <taxon>Lactobacillus</taxon>
    </lineage>
</organism>
<keyword id="KW-0067">ATP-binding</keyword>
<keyword id="KW-0133">Cell shape</keyword>
<keyword id="KW-0961">Cell wall biogenesis/degradation</keyword>
<keyword id="KW-0963">Cytoplasm</keyword>
<keyword id="KW-0436">Ligase</keyword>
<keyword id="KW-0460">Magnesium</keyword>
<keyword id="KW-0464">Manganese</keyword>
<keyword id="KW-0479">Metal-binding</keyword>
<keyword id="KW-0547">Nucleotide-binding</keyword>
<keyword id="KW-0573">Peptidoglycan synthesis</keyword>
<keyword id="KW-1185">Reference proteome</keyword>
<accession>Q1G7Q5</accession>
<name>DDL_LACDA</name>
<comment type="function">
    <text evidence="2">Cell wall formation.</text>
</comment>
<comment type="catalytic activity">
    <reaction evidence="2">
        <text>2 D-alanine + ATP = D-alanyl-D-alanine + ADP + phosphate + H(+)</text>
        <dbReference type="Rhea" id="RHEA:11224"/>
        <dbReference type="ChEBI" id="CHEBI:15378"/>
        <dbReference type="ChEBI" id="CHEBI:30616"/>
        <dbReference type="ChEBI" id="CHEBI:43474"/>
        <dbReference type="ChEBI" id="CHEBI:57416"/>
        <dbReference type="ChEBI" id="CHEBI:57822"/>
        <dbReference type="ChEBI" id="CHEBI:456216"/>
        <dbReference type="EC" id="6.3.2.4"/>
    </reaction>
</comment>
<comment type="cofactor">
    <cofactor evidence="1">
        <name>Mg(2+)</name>
        <dbReference type="ChEBI" id="CHEBI:18420"/>
    </cofactor>
    <cofactor evidence="1">
        <name>Mn(2+)</name>
        <dbReference type="ChEBI" id="CHEBI:29035"/>
    </cofactor>
    <text evidence="1">Binds 2 magnesium or manganese ions per subunit.</text>
</comment>
<comment type="pathway">
    <text evidence="2">Cell wall biogenesis; peptidoglycan biosynthesis.</text>
</comment>
<comment type="subcellular location">
    <subcellularLocation>
        <location evidence="2">Cytoplasm</location>
    </subcellularLocation>
</comment>
<comment type="similarity">
    <text evidence="2">Belongs to the D-alanine--D-alanine ligase family.</text>
</comment>
<sequence>MTKKTQVGLIFGGNSSEYEVSITSAGNIYKAIDKDKFDVHPIWITNSGYVASEADSYKVLEEPGYMVEKNDKTANLSNLIELASRPELDVLFPIVHGNLGEDGVLQGLFRLIDKPFVGVDVLAAAVTMDKEFTKILAQRAGVPVAKWVSIKRYEYEDAKNQKLSYDWVSGQLGTSNLFVKPSNQGSSVGITHVTDDSNYAEALAEAFKYDDKVLVEEGIVGTEVETAVLGNDHPVVSGVGQIINADNTWYSYENKYSTESTTTLQIPAQIPAETAEKVQENALKIYQITECSGMARVDSMLRESDGEVIFNELNALPGFTNISMYPKLFEEAGISYPDLITRLIRLAEERYAHKKTLLRKHD</sequence>
<protein>
    <recommendedName>
        <fullName evidence="2">D-alanine--D-alanine ligase</fullName>
        <ecNumber evidence="2">6.3.2.4</ecNumber>
    </recommendedName>
    <alternativeName>
        <fullName evidence="2">D-Ala-D-Ala ligase</fullName>
    </alternativeName>
    <alternativeName>
        <fullName evidence="2">D-alanylalanine synthetase</fullName>
    </alternativeName>
</protein>